<name>GATA_CAMJJ</name>
<keyword id="KW-0067">ATP-binding</keyword>
<keyword id="KW-0436">Ligase</keyword>
<keyword id="KW-0547">Nucleotide-binding</keyword>
<keyword id="KW-0648">Protein biosynthesis</keyword>
<comment type="function">
    <text evidence="1">Allows the formation of correctly charged Gln-tRNA(Gln) through the transamidation of misacylated Glu-tRNA(Gln) in organisms which lack glutaminyl-tRNA synthetase. The reaction takes place in the presence of glutamine and ATP through an activated gamma-phospho-Glu-tRNA(Gln).</text>
</comment>
<comment type="catalytic activity">
    <reaction evidence="1">
        <text>L-glutamyl-tRNA(Gln) + L-glutamine + ATP + H2O = L-glutaminyl-tRNA(Gln) + L-glutamate + ADP + phosphate + H(+)</text>
        <dbReference type="Rhea" id="RHEA:17521"/>
        <dbReference type="Rhea" id="RHEA-COMP:9681"/>
        <dbReference type="Rhea" id="RHEA-COMP:9684"/>
        <dbReference type="ChEBI" id="CHEBI:15377"/>
        <dbReference type="ChEBI" id="CHEBI:15378"/>
        <dbReference type="ChEBI" id="CHEBI:29985"/>
        <dbReference type="ChEBI" id="CHEBI:30616"/>
        <dbReference type="ChEBI" id="CHEBI:43474"/>
        <dbReference type="ChEBI" id="CHEBI:58359"/>
        <dbReference type="ChEBI" id="CHEBI:78520"/>
        <dbReference type="ChEBI" id="CHEBI:78521"/>
        <dbReference type="ChEBI" id="CHEBI:456216"/>
        <dbReference type="EC" id="6.3.5.7"/>
    </reaction>
</comment>
<comment type="subunit">
    <text evidence="1">Heterotrimer of A, B and C subunits.</text>
</comment>
<comment type="similarity">
    <text evidence="1">Belongs to the amidase family. GatA subfamily.</text>
</comment>
<gene>
    <name evidence="1" type="primary">gatA</name>
    <name type="ordered locus">CJJ81176_1079</name>
</gene>
<evidence type="ECO:0000255" key="1">
    <source>
        <dbReference type="HAMAP-Rule" id="MF_00120"/>
    </source>
</evidence>
<proteinExistence type="inferred from homology"/>
<dbReference type="EC" id="6.3.5.7" evidence="1"/>
<dbReference type="EMBL" id="CP000538">
    <property type="protein sequence ID" value="EAQ72088.1"/>
    <property type="molecule type" value="Genomic_DNA"/>
</dbReference>
<dbReference type="RefSeq" id="WP_002853884.1">
    <property type="nucleotide sequence ID" value="NC_008787.1"/>
</dbReference>
<dbReference type="SMR" id="A1W048"/>
<dbReference type="KEGG" id="cjj:CJJ81176_1079"/>
<dbReference type="eggNOG" id="COG0154">
    <property type="taxonomic scope" value="Bacteria"/>
</dbReference>
<dbReference type="HOGENOM" id="CLU_009600_0_3_7"/>
<dbReference type="Proteomes" id="UP000000646">
    <property type="component" value="Chromosome"/>
</dbReference>
<dbReference type="GO" id="GO:0030956">
    <property type="term" value="C:glutamyl-tRNA(Gln) amidotransferase complex"/>
    <property type="evidence" value="ECO:0007669"/>
    <property type="project" value="InterPro"/>
</dbReference>
<dbReference type="GO" id="GO:0005524">
    <property type="term" value="F:ATP binding"/>
    <property type="evidence" value="ECO:0007669"/>
    <property type="project" value="UniProtKB-KW"/>
</dbReference>
<dbReference type="GO" id="GO:0050567">
    <property type="term" value="F:glutaminyl-tRNA synthase (glutamine-hydrolyzing) activity"/>
    <property type="evidence" value="ECO:0007669"/>
    <property type="project" value="UniProtKB-UniRule"/>
</dbReference>
<dbReference type="GO" id="GO:0006412">
    <property type="term" value="P:translation"/>
    <property type="evidence" value="ECO:0007669"/>
    <property type="project" value="UniProtKB-UniRule"/>
</dbReference>
<dbReference type="Gene3D" id="3.90.1300.10">
    <property type="entry name" value="Amidase signature (AS) domain"/>
    <property type="match status" value="1"/>
</dbReference>
<dbReference type="HAMAP" id="MF_00120">
    <property type="entry name" value="GatA"/>
    <property type="match status" value="1"/>
</dbReference>
<dbReference type="InterPro" id="IPR000120">
    <property type="entry name" value="Amidase"/>
</dbReference>
<dbReference type="InterPro" id="IPR020556">
    <property type="entry name" value="Amidase_CS"/>
</dbReference>
<dbReference type="InterPro" id="IPR023631">
    <property type="entry name" value="Amidase_dom"/>
</dbReference>
<dbReference type="InterPro" id="IPR036928">
    <property type="entry name" value="AS_sf"/>
</dbReference>
<dbReference type="InterPro" id="IPR004412">
    <property type="entry name" value="GatA"/>
</dbReference>
<dbReference type="NCBIfam" id="TIGR00132">
    <property type="entry name" value="gatA"/>
    <property type="match status" value="1"/>
</dbReference>
<dbReference type="PANTHER" id="PTHR11895:SF151">
    <property type="entry name" value="GLUTAMYL-TRNA(GLN) AMIDOTRANSFERASE SUBUNIT A"/>
    <property type="match status" value="1"/>
</dbReference>
<dbReference type="PANTHER" id="PTHR11895">
    <property type="entry name" value="TRANSAMIDASE"/>
    <property type="match status" value="1"/>
</dbReference>
<dbReference type="Pfam" id="PF01425">
    <property type="entry name" value="Amidase"/>
    <property type="match status" value="1"/>
</dbReference>
<dbReference type="SUPFAM" id="SSF75304">
    <property type="entry name" value="Amidase signature (AS) enzymes"/>
    <property type="match status" value="1"/>
</dbReference>
<dbReference type="PROSITE" id="PS00571">
    <property type="entry name" value="AMIDASES"/>
    <property type="match status" value="1"/>
</dbReference>
<protein>
    <recommendedName>
        <fullName evidence="1">Glutamyl-tRNA(Gln) amidotransferase subunit A</fullName>
        <shortName evidence="1">Glu-ADT subunit A</shortName>
        <ecNumber evidence="1">6.3.5.7</ecNumber>
    </recommendedName>
</protein>
<feature type="chain" id="PRO_1000015819" description="Glutamyl-tRNA(Gln) amidotransferase subunit A">
    <location>
        <begin position="1"/>
        <end position="453"/>
    </location>
</feature>
<feature type="active site" description="Charge relay system" evidence="1">
    <location>
        <position position="56"/>
    </location>
</feature>
<feature type="active site" description="Charge relay system" evidence="1">
    <location>
        <position position="131"/>
    </location>
</feature>
<feature type="active site" description="Acyl-ester intermediate" evidence="1">
    <location>
        <position position="155"/>
    </location>
</feature>
<reference key="1">
    <citation type="submission" date="2006-12" db="EMBL/GenBank/DDBJ databases">
        <authorList>
            <person name="Fouts D.E."/>
            <person name="Nelson K.E."/>
            <person name="Sebastian Y."/>
        </authorList>
    </citation>
    <scope>NUCLEOTIDE SEQUENCE [LARGE SCALE GENOMIC DNA]</scope>
    <source>
        <strain>81-176</strain>
    </source>
</reference>
<sequence length="453" mass="49284">MITLKEALKYSKEELENLKKELNEKAKKEKKLGAYIEQFLDKDLSVSGEGVPVAIKDNISVKGWELTSASKILQGYIAPYDASAIVNLKANGFSPFGRCNMDEFAMGSSTASSCYGKTLNPLNFERVPGGSSGGSAAAVAGGLALASLGSDTGGSVRQPAAFCGCVGFKPSYGRVSRYGLASYSSSLDQIGVLTQNVEDAAILYDAIAGYDKMDSTSANIEFIKTVPNLNANKKLKIAVIENYVNDADSEVKNALLKTIDMLKANGHEIVYKNLLDSKFDIAAYYIIATAEASANLSRYDGVRYGKRSENIQNLKEMYVNTRSEGFGEEVKRRILLGTFVLSSGYYDAYYIKAQKARAFIKAKYEEILQDCDLIFMPVTPTTAFKFDTQKSPMQTYLEDVYTISVNLAGLGGISVPVAKDKEGLNISAQLICKAYDEQTLLDGALSLEQMIKN</sequence>
<accession>A1W048</accession>
<organism>
    <name type="scientific">Campylobacter jejuni subsp. jejuni serotype O:23/36 (strain 81-176)</name>
    <dbReference type="NCBI Taxonomy" id="354242"/>
    <lineage>
        <taxon>Bacteria</taxon>
        <taxon>Pseudomonadati</taxon>
        <taxon>Campylobacterota</taxon>
        <taxon>Epsilonproteobacteria</taxon>
        <taxon>Campylobacterales</taxon>
        <taxon>Campylobacteraceae</taxon>
        <taxon>Campylobacter</taxon>
    </lineage>
</organism>